<sequence length="136" mass="15201">MGATISILASYDNPNLFTAMILMSPLVNADAVSRLNLLAAKLMGTITPNAPVGKLCPESVSRDMDKVYKYQYDPLINHEKIKAGFASQVLKATNKVRKIISKINTPRLSYSREQTMRLVMFQVHIISCNMQIVIEK</sequence>
<feature type="chain" id="PRO_0000099603" description="Protein K5">
    <location>
        <begin position="1"/>
        <end position="136"/>
    </location>
</feature>
<dbReference type="EMBL" id="M35027">
    <property type="protein sequence ID" value="AAA48011.1"/>
    <property type="molecule type" value="Genomic_DNA"/>
</dbReference>
<dbReference type="PIR" id="D42505">
    <property type="entry name" value="D42505"/>
</dbReference>
<dbReference type="SMR" id="P21084"/>
<dbReference type="ESTHER" id="cowvi-M5L">
    <property type="family name" value="Monoglyceridelipase_lysophospholip"/>
</dbReference>
<dbReference type="Proteomes" id="UP000008269">
    <property type="component" value="Segment"/>
</dbReference>
<dbReference type="Gene3D" id="3.40.50.1820">
    <property type="entry name" value="alpha/beta hydrolase"/>
    <property type="match status" value="1"/>
</dbReference>
<dbReference type="InterPro" id="IPR029058">
    <property type="entry name" value="AB_hydrolase_fold"/>
</dbReference>
<dbReference type="InterPro" id="IPR022742">
    <property type="entry name" value="Hydrolase_4"/>
</dbReference>
<dbReference type="InterPro" id="IPR051044">
    <property type="entry name" value="MAG_DAG_Lipase"/>
</dbReference>
<dbReference type="PANTHER" id="PTHR11614">
    <property type="entry name" value="PHOSPHOLIPASE-RELATED"/>
    <property type="match status" value="1"/>
</dbReference>
<dbReference type="Pfam" id="PF12146">
    <property type="entry name" value="Hydrolase_4"/>
    <property type="match status" value="1"/>
</dbReference>
<evidence type="ECO:0000305" key="1"/>
<accession>P21084</accession>
<proteinExistence type="inferred from homology"/>
<organismHost>
    <name type="scientific">Homo sapiens</name>
    <name type="common">Human</name>
    <dbReference type="NCBI Taxonomy" id="9606"/>
</organismHost>
<comment type="similarity">
    <text evidence="1">Belongs to the poxviridae K5 protein family.</text>
</comment>
<reference key="1">
    <citation type="journal article" date="1990" name="Virology">
        <title>The complete DNA sequence of vaccinia virus.</title>
        <authorList>
            <person name="Goebel S.J."/>
            <person name="Johnson G.P."/>
            <person name="Perkus M.E."/>
            <person name="Davis S.W."/>
            <person name="Winslow J.P."/>
            <person name="Paoletti E."/>
        </authorList>
    </citation>
    <scope>NUCLEOTIDE SEQUENCE [LARGE SCALE GENOMIC DNA]</scope>
</reference>
<reference key="2">
    <citation type="journal article" date="1990" name="Virology">
        <title>Appendix to 'The complete DNA sequence of vaccinia virus'.</title>
        <authorList>
            <person name="Goebel S.J."/>
            <person name="Johnson G.P."/>
            <person name="Perkus M.E."/>
            <person name="Davis S.W."/>
            <person name="Winslow J.P."/>
            <person name="Paoletti E."/>
        </authorList>
    </citation>
    <scope>NUCLEOTIDE SEQUENCE [LARGE SCALE GENOMIC DNA]</scope>
</reference>
<gene>
    <name type="ORF">K5L</name>
</gene>
<protein>
    <recommendedName>
        <fullName>Protein K5</fullName>
    </recommendedName>
</protein>
<organism>
    <name type="scientific">Vaccinia virus (strain Copenhagen)</name>
    <name type="common">VACV</name>
    <dbReference type="NCBI Taxonomy" id="10249"/>
    <lineage>
        <taxon>Viruses</taxon>
        <taxon>Varidnaviria</taxon>
        <taxon>Bamfordvirae</taxon>
        <taxon>Nucleocytoviricota</taxon>
        <taxon>Pokkesviricetes</taxon>
        <taxon>Chitovirales</taxon>
        <taxon>Poxviridae</taxon>
        <taxon>Chordopoxvirinae</taxon>
        <taxon>Orthopoxvirus</taxon>
        <taxon>Vaccinia virus</taxon>
    </lineage>
</organism>
<keyword id="KW-1185">Reference proteome</keyword>
<name>K5_VACCC</name>